<gene>
    <name evidence="5" type="primary">gbcA</name>
    <name evidence="8" type="ordered locus">PA5410</name>
</gene>
<organism>
    <name type="scientific">Pseudomonas aeruginosa (strain ATCC 15692 / DSM 22644 / CIP 104116 / JCM 14847 / LMG 12228 / 1C / PRS 101 / PAO1)</name>
    <dbReference type="NCBI Taxonomy" id="208964"/>
    <lineage>
        <taxon>Bacteria</taxon>
        <taxon>Pseudomonadati</taxon>
        <taxon>Pseudomonadota</taxon>
        <taxon>Gammaproteobacteria</taxon>
        <taxon>Pseudomonadales</taxon>
        <taxon>Pseudomonadaceae</taxon>
        <taxon>Pseudomonas</taxon>
    </lineage>
</organism>
<name>GBMOO_PSEAE</name>
<comment type="function">
    <text evidence="4 6 7">Involved in degradation of glycine betaine (PubMed:17951379). Part of a Rieske-type oxygenase system that catalyzes the conversion of glycine betaine (GB) to dimethylglycine (DMG) (Probable). This subunit is the terminal oxygenase component of the system (Probable). Required for growth on choline and GB, but not for growth on DMG (PubMed:17951379).</text>
</comment>
<comment type="catalytic activity">
    <reaction evidence="1">
        <text>glycine betaine + NADH + O2 + H(+) = N,N-dimethylglycine + formaldehyde + NAD(+) + H2O</text>
        <dbReference type="Rhea" id="RHEA:45700"/>
        <dbReference type="ChEBI" id="CHEBI:15377"/>
        <dbReference type="ChEBI" id="CHEBI:15378"/>
        <dbReference type="ChEBI" id="CHEBI:15379"/>
        <dbReference type="ChEBI" id="CHEBI:16842"/>
        <dbReference type="ChEBI" id="CHEBI:17750"/>
        <dbReference type="ChEBI" id="CHEBI:57540"/>
        <dbReference type="ChEBI" id="CHEBI:57945"/>
        <dbReference type="ChEBI" id="CHEBI:58251"/>
        <dbReference type="EC" id="1.14.13.251"/>
    </reaction>
    <physiologicalReaction direction="left-to-right" evidence="1">
        <dbReference type="Rhea" id="RHEA:45701"/>
    </physiologicalReaction>
</comment>
<comment type="cofactor">
    <cofactor evidence="1">
        <name>[2Fe-2S] cluster</name>
        <dbReference type="ChEBI" id="CHEBI:190135"/>
    </cofactor>
    <text evidence="1">Binds 1 [2Fe-2S] cluster per subunit.</text>
</comment>
<comment type="cofactor">
    <cofactor evidence="1">
        <name>Fe cation</name>
        <dbReference type="ChEBI" id="CHEBI:24875"/>
    </cofactor>
    <text evidence="1">Binds 1 Fe cation per subunit.</text>
</comment>
<comment type="subunit">
    <text evidence="7">The system is composed of an oxygenase subunit (GbcA) and a reductase subunit (GbcB).</text>
</comment>
<comment type="induction">
    <text evidence="4">Transcriptionally regulated by GbdR.</text>
</comment>
<comment type="disruption phenotype">
    <text evidence="4">Deletion of gbcA and gbcB abrogates the ability to grow on glycine betaine as a sole carbon source.</text>
</comment>
<comment type="similarity">
    <text evidence="6">Belongs to the bacterial ring-hydroxylating dioxygenase alpha subunit family.</text>
</comment>
<sequence length="429" mass="48666">MDVTSTLSLGDPLEPARKATADMLRSRDHSFSLPQPFYCDQRLFEIDMQEIFHKEWLIAGMTCEIPAKGNFLTLQIGKNPVLVIRGAEGQVHAFHNVCRHRGSRLCVSEKGKVAKLVCPYHQWTYELDGRLLFAGTEMGADFDMKEYGLKPIQVKTAGGYIFISLAENPPAIDDFLATLEHYMEPYDMENAKVAVQTTIREAANWKLVIENNRECYHCNGSHPELLKTLLEWDDVTDPRASQAFKDQVAACTSAWDAEKIPYAHASFGLRNRIVRMPLLDGTVSMTMDGKQGSKKLMGRIKNPDLGSMRILHLPHSWNHCMGDHLIVFTVWPISAQETLVTTKWLVHKDAVEGVDYDVARLREVWDATNDQDRRLAEENQRGINSDAYQPGPYSKTYEFGVINFLDWYSERMLNNLGEESAHVRKVAGS</sequence>
<proteinExistence type="evidence at transcript level"/>
<keyword id="KW-0001">2Fe-2S</keyword>
<keyword id="KW-0408">Iron</keyword>
<keyword id="KW-0411">Iron-sulfur</keyword>
<keyword id="KW-0479">Metal-binding</keyword>
<keyword id="KW-0503">Monooxygenase</keyword>
<keyword id="KW-0520">NAD</keyword>
<keyword id="KW-0560">Oxidoreductase</keyword>
<keyword id="KW-1185">Reference proteome</keyword>
<protein>
    <recommendedName>
        <fullName evidence="6">Glycine betaine monooxygenase oxygenase subunit</fullName>
        <ecNumber evidence="1">1.14.13.251</ecNumber>
    </recommendedName>
    <alternativeName>
        <fullName evidence="5">Glycine betaine catabolism A</fullName>
    </alternativeName>
</protein>
<reference key="1">
    <citation type="journal article" date="2000" name="Nature">
        <title>Complete genome sequence of Pseudomonas aeruginosa PAO1, an opportunistic pathogen.</title>
        <authorList>
            <person name="Stover C.K."/>
            <person name="Pham X.-Q.T."/>
            <person name="Erwin A.L."/>
            <person name="Mizoguchi S.D."/>
            <person name="Warrener P."/>
            <person name="Hickey M.J."/>
            <person name="Brinkman F.S.L."/>
            <person name="Hufnagle W.O."/>
            <person name="Kowalik D.J."/>
            <person name="Lagrou M."/>
            <person name="Garber R.L."/>
            <person name="Goltry L."/>
            <person name="Tolentino E."/>
            <person name="Westbrock-Wadman S."/>
            <person name="Yuan Y."/>
            <person name="Brody L.L."/>
            <person name="Coulter S.N."/>
            <person name="Folger K.R."/>
            <person name="Kas A."/>
            <person name="Larbig K."/>
            <person name="Lim R.M."/>
            <person name="Smith K.A."/>
            <person name="Spencer D.H."/>
            <person name="Wong G.K.-S."/>
            <person name="Wu Z."/>
            <person name="Paulsen I.T."/>
            <person name="Reizer J."/>
            <person name="Saier M.H. Jr."/>
            <person name="Hancock R.E.W."/>
            <person name="Lory S."/>
            <person name="Olson M.V."/>
        </authorList>
    </citation>
    <scope>NUCLEOTIDE SEQUENCE [LARGE SCALE GENOMIC DNA]</scope>
    <source>
        <strain>ATCC 15692 / DSM 22644 / CIP 104116 / JCM 14847 / LMG 12228 / 1C / PRS 101 / PAO1</strain>
    </source>
</reference>
<reference key="2">
    <citation type="journal article" date="2008" name="J. Bacteriol.">
        <title>Identification of two gene clusters and a transcriptional regulator required for Pseudomonas aeruginosa glycine betaine catabolism.</title>
        <authorList>
            <person name="Wargo M.J."/>
            <person name="Szwergold B.S."/>
            <person name="Hogan D.A."/>
        </authorList>
    </citation>
    <scope>FUNCTION</scope>
    <scope>INDUCTION</scope>
    <scope>DISRUPTION PHENOTYPE</scope>
    <source>
        <strain>ATCC 15692 / DSM 22644 / CIP 104116 / JCM 14847 / LMG 12228 / 1C / PRS 101 / PAO1</strain>
    </source>
</reference>
<feature type="chain" id="PRO_0000459094" description="Glycine betaine monooxygenase oxygenase subunit">
    <location>
        <begin position="1"/>
        <end position="429"/>
    </location>
</feature>
<feature type="domain" description="Rieske" evidence="3">
    <location>
        <begin position="56"/>
        <end position="163"/>
    </location>
</feature>
<feature type="binding site" evidence="3">
    <location>
        <position position="98"/>
    </location>
    <ligand>
        <name>[2Fe-2S] cluster</name>
        <dbReference type="ChEBI" id="CHEBI:190135"/>
    </ligand>
</feature>
<feature type="binding site" evidence="3">
    <location>
        <position position="100"/>
    </location>
    <ligand>
        <name>[2Fe-2S] cluster</name>
        <dbReference type="ChEBI" id="CHEBI:190135"/>
    </ligand>
</feature>
<feature type="binding site" evidence="3">
    <location>
        <position position="118"/>
    </location>
    <ligand>
        <name>[2Fe-2S] cluster</name>
        <dbReference type="ChEBI" id="CHEBI:190135"/>
    </ligand>
</feature>
<feature type="binding site" evidence="3">
    <location>
        <position position="121"/>
    </location>
    <ligand>
        <name>[2Fe-2S] cluster</name>
        <dbReference type="ChEBI" id="CHEBI:190135"/>
    </ligand>
</feature>
<feature type="binding site" evidence="2">
    <location>
        <position position="217"/>
    </location>
    <ligand>
        <name>Fe cation</name>
        <dbReference type="ChEBI" id="CHEBI:24875"/>
    </ligand>
</feature>
<feature type="binding site" evidence="2">
    <location>
        <position position="222"/>
    </location>
    <ligand>
        <name>Fe cation</name>
        <dbReference type="ChEBI" id="CHEBI:24875"/>
    </ligand>
</feature>
<accession>Q9HTF4</accession>
<dbReference type="EC" id="1.14.13.251" evidence="1"/>
<dbReference type="EMBL" id="AE004091">
    <property type="protein sequence ID" value="AAG08795.1"/>
    <property type="molecule type" value="Genomic_DNA"/>
</dbReference>
<dbReference type="PIR" id="F82970">
    <property type="entry name" value="F82970"/>
</dbReference>
<dbReference type="RefSeq" id="NP_254097.1">
    <property type="nucleotide sequence ID" value="NC_002516.2"/>
</dbReference>
<dbReference type="RefSeq" id="WP_003096766.1">
    <property type="nucleotide sequence ID" value="NZ_QZGE01000031.1"/>
</dbReference>
<dbReference type="SMR" id="Q9HTF4"/>
<dbReference type="STRING" id="208964.PA5410"/>
<dbReference type="PaxDb" id="208964-PA5410"/>
<dbReference type="DNASU" id="880240"/>
<dbReference type="GeneID" id="880240"/>
<dbReference type="KEGG" id="pae:PA5410"/>
<dbReference type="PATRIC" id="fig|208964.12.peg.5670"/>
<dbReference type="PseudoCAP" id="PA5410"/>
<dbReference type="HOGENOM" id="CLU_026244_3_0_6"/>
<dbReference type="InParanoid" id="Q9HTF4"/>
<dbReference type="OrthoDB" id="9769355at2"/>
<dbReference type="PhylomeDB" id="Q9HTF4"/>
<dbReference type="BioCyc" id="MetaCyc:MONOMER-21821"/>
<dbReference type="BioCyc" id="PAER208964:G1FZ6-5537-MONOMER"/>
<dbReference type="Proteomes" id="UP000002438">
    <property type="component" value="Chromosome"/>
</dbReference>
<dbReference type="GO" id="GO:0051537">
    <property type="term" value="F:2 iron, 2 sulfur cluster binding"/>
    <property type="evidence" value="ECO:0007669"/>
    <property type="project" value="UniProtKB-KW"/>
</dbReference>
<dbReference type="GO" id="GO:0005506">
    <property type="term" value="F:iron ion binding"/>
    <property type="evidence" value="ECO:0007669"/>
    <property type="project" value="InterPro"/>
</dbReference>
<dbReference type="GO" id="GO:0004497">
    <property type="term" value="F:monooxygenase activity"/>
    <property type="evidence" value="ECO:0007669"/>
    <property type="project" value="UniProtKB-KW"/>
</dbReference>
<dbReference type="GO" id="GO:0031457">
    <property type="term" value="P:glycine betaine catabolic process"/>
    <property type="evidence" value="ECO:0000315"/>
    <property type="project" value="PseudoCAP"/>
</dbReference>
<dbReference type="CDD" id="cd08884">
    <property type="entry name" value="RHO_alpha_C_GbcA-like"/>
    <property type="match status" value="1"/>
</dbReference>
<dbReference type="CDD" id="cd03469">
    <property type="entry name" value="Rieske_RO_Alpha_N"/>
    <property type="match status" value="1"/>
</dbReference>
<dbReference type="FunFam" id="2.102.10.10:FF:000020">
    <property type="entry name" value="Aromatic ring-hydroxylating dioxygenase subunit alpha"/>
    <property type="match status" value="1"/>
</dbReference>
<dbReference type="Gene3D" id="3.90.380.10">
    <property type="entry name" value="Naphthalene 1,2-dioxygenase Alpha Subunit, Chain A, domain 1"/>
    <property type="match status" value="1"/>
</dbReference>
<dbReference type="Gene3D" id="2.102.10.10">
    <property type="entry name" value="Rieske [2Fe-2S] iron-sulphur domain"/>
    <property type="match status" value="1"/>
</dbReference>
<dbReference type="InterPro" id="IPR017941">
    <property type="entry name" value="Rieske_2Fe-2S"/>
</dbReference>
<dbReference type="InterPro" id="IPR036922">
    <property type="entry name" value="Rieske_2Fe-2S_sf"/>
</dbReference>
<dbReference type="InterPro" id="IPR015879">
    <property type="entry name" value="Ring_hydroxy_dOase_asu_C_dom"/>
</dbReference>
<dbReference type="InterPro" id="IPR001663">
    <property type="entry name" value="Rng_hydr_dOase-A"/>
</dbReference>
<dbReference type="PANTHER" id="PTHR43756">
    <property type="entry name" value="CHOLINE MONOOXYGENASE, CHLOROPLASTIC"/>
    <property type="match status" value="1"/>
</dbReference>
<dbReference type="PANTHER" id="PTHR43756:SF5">
    <property type="entry name" value="CHOLINE MONOOXYGENASE, CHLOROPLASTIC"/>
    <property type="match status" value="1"/>
</dbReference>
<dbReference type="Pfam" id="PF00355">
    <property type="entry name" value="Rieske"/>
    <property type="match status" value="1"/>
</dbReference>
<dbReference type="Pfam" id="PF00848">
    <property type="entry name" value="Ring_hydroxyl_A"/>
    <property type="match status" value="1"/>
</dbReference>
<dbReference type="PRINTS" id="PR00090">
    <property type="entry name" value="RNGDIOXGNASE"/>
</dbReference>
<dbReference type="SUPFAM" id="SSF55961">
    <property type="entry name" value="Bet v1-like"/>
    <property type="match status" value="1"/>
</dbReference>
<dbReference type="SUPFAM" id="SSF50022">
    <property type="entry name" value="ISP domain"/>
    <property type="match status" value="1"/>
</dbReference>
<dbReference type="PROSITE" id="PS51296">
    <property type="entry name" value="RIESKE"/>
    <property type="match status" value="1"/>
</dbReference>
<evidence type="ECO:0000250" key="1">
    <source>
        <dbReference type="UniProtKB" id="Q1QYU7"/>
    </source>
</evidence>
<evidence type="ECO:0000250" key="2">
    <source>
        <dbReference type="UniProtKB" id="Q53122"/>
    </source>
</evidence>
<evidence type="ECO:0000255" key="3">
    <source>
        <dbReference type="PROSITE-ProRule" id="PRU00628"/>
    </source>
</evidence>
<evidence type="ECO:0000269" key="4">
    <source>
    </source>
</evidence>
<evidence type="ECO:0000303" key="5">
    <source>
    </source>
</evidence>
<evidence type="ECO:0000305" key="6"/>
<evidence type="ECO:0000305" key="7">
    <source>
    </source>
</evidence>
<evidence type="ECO:0000312" key="8">
    <source>
        <dbReference type="EMBL" id="AAG08795.1"/>
    </source>
</evidence>